<dbReference type="EMBL" id="AK008455">
    <property type="protein sequence ID" value="BAB25678.1"/>
    <property type="molecule type" value="mRNA"/>
</dbReference>
<dbReference type="EMBL" id="BC031607">
    <property type="protein sequence ID" value="AAH31607.1"/>
    <property type="molecule type" value="mRNA"/>
</dbReference>
<dbReference type="CCDS" id="CCDS26610.1"/>
<dbReference type="PDB" id="7O3C">
    <property type="method" value="EM"/>
    <property type="resolution" value="3.30 A"/>
    <property type="chains" value="F/Q=2-111"/>
</dbReference>
<dbReference type="PDB" id="7O3E">
    <property type="method" value="EM"/>
    <property type="resolution" value="3.60 A"/>
    <property type="chains" value="F/Q=2-111"/>
</dbReference>
<dbReference type="PDB" id="7O3H">
    <property type="method" value="EM"/>
    <property type="resolution" value="2.60 A"/>
    <property type="chains" value="F/Q=2-111"/>
</dbReference>
<dbReference type="PDB" id="8PW5">
    <property type="method" value="EM"/>
    <property type="resolution" value="3.60 A"/>
    <property type="chains" value="F/Q=1-111"/>
</dbReference>
<dbReference type="PDB" id="8PW6">
    <property type="method" value="EM"/>
    <property type="resolution" value="3.30 A"/>
    <property type="chains" value="F/Q=1-111"/>
</dbReference>
<dbReference type="PDB" id="8PW7">
    <property type="method" value="EM"/>
    <property type="resolution" value="3.50 A"/>
    <property type="chains" value="F/Q=1-111"/>
</dbReference>
<dbReference type="PDBsum" id="7O3C"/>
<dbReference type="PDBsum" id="7O3E"/>
<dbReference type="PDBsum" id="7O3H"/>
<dbReference type="PDBsum" id="8PW5"/>
<dbReference type="PDBsum" id="8PW6"/>
<dbReference type="PDBsum" id="8PW7"/>
<dbReference type="SMR" id="Q9D855"/>
<dbReference type="ComplexPortal" id="CPX-563">
    <property type="entry name" value="Mitochondrial respiratory chain complex III"/>
</dbReference>
<dbReference type="CORUM" id="Q9D855"/>
<dbReference type="FunCoup" id="Q9D855">
    <property type="interactions" value="1134"/>
</dbReference>
<dbReference type="IntAct" id="Q9D855">
    <property type="interactions" value="2"/>
</dbReference>
<dbReference type="STRING" id="10090.ENSMUSP00000021993"/>
<dbReference type="GlyGen" id="Q9D855">
    <property type="glycosylation" value="1 site, 1 O-linked glycan (1 site)"/>
</dbReference>
<dbReference type="iPTMnet" id="Q9D855"/>
<dbReference type="PhosphoSitePlus" id="Q9D855"/>
<dbReference type="SwissPalm" id="Q9D855"/>
<dbReference type="jPOST" id="Q9D855"/>
<dbReference type="PaxDb" id="10090-ENSMUSP00000021993"/>
<dbReference type="ProteomicsDB" id="300367"/>
<dbReference type="Pumba" id="Q9D855"/>
<dbReference type="TopDownProteomics" id="Q9D855"/>
<dbReference type="AGR" id="MGI:1914780"/>
<dbReference type="MGI" id="MGI:1914780">
    <property type="gene designation" value="Uqcrb"/>
</dbReference>
<dbReference type="eggNOG" id="KOG3440">
    <property type="taxonomic scope" value="Eukaryota"/>
</dbReference>
<dbReference type="InParanoid" id="Q9D855"/>
<dbReference type="PhylomeDB" id="Q9D855"/>
<dbReference type="Reactome" id="R-MMU-611105">
    <property type="pathway name" value="Respiratory electron transport"/>
</dbReference>
<dbReference type="Reactome" id="R-MMU-9865881">
    <property type="pathway name" value="Complex III assembly"/>
</dbReference>
<dbReference type="ChiTaRS" id="Uqcrb">
    <property type="organism name" value="mouse"/>
</dbReference>
<dbReference type="PRO" id="PR:Q9D855"/>
<dbReference type="Proteomes" id="UP000000589">
    <property type="component" value="Unplaced"/>
</dbReference>
<dbReference type="RNAct" id="Q9D855">
    <property type="molecule type" value="protein"/>
</dbReference>
<dbReference type="GO" id="GO:0005743">
    <property type="term" value="C:mitochondrial inner membrane"/>
    <property type="evidence" value="ECO:0000314"/>
    <property type="project" value="UniProtKB"/>
</dbReference>
<dbReference type="GO" id="GO:0005739">
    <property type="term" value="C:mitochondrion"/>
    <property type="evidence" value="ECO:0000314"/>
    <property type="project" value="MGI"/>
</dbReference>
<dbReference type="GO" id="GO:0045275">
    <property type="term" value="C:respiratory chain complex III"/>
    <property type="evidence" value="ECO:0000314"/>
    <property type="project" value="UniProtKB"/>
</dbReference>
<dbReference type="GO" id="GO:0045333">
    <property type="term" value="P:cellular respiration"/>
    <property type="evidence" value="ECO:0000303"/>
    <property type="project" value="ComplexPortal"/>
</dbReference>
<dbReference type="GO" id="GO:0006122">
    <property type="term" value="P:mitochondrial electron transport, ubiquinol to cytochrome c"/>
    <property type="evidence" value="ECO:0000303"/>
    <property type="project" value="ComplexPortal"/>
</dbReference>
<dbReference type="FunFam" id="1.10.1090.10:FF:000001">
    <property type="entry name" value="Cytochrome b-c1 complex subunit 7"/>
    <property type="match status" value="1"/>
</dbReference>
<dbReference type="Gene3D" id="1.10.1090.10">
    <property type="entry name" value="Cytochrome b-c1 complex subunit 7"/>
    <property type="match status" value="1"/>
</dbReference>
<dbReference type="InterPro" id="IPR003197">
    <property type="entry name" value="QCR7"/>
</dbReference>
<dbReference type="InterPro" id="IPR036544">
    <property type="entry name" value="QCR7_sf"/>
</dbReference>
<dbReference type="PANTHER" id="PTHR12022:SF12">
    <property type="entry name" value="CYTOCHROME B-C1 COMPLEX SUBUNIT 7"/>
    <property type="match status" value="1"/>
</dbReference>
<dbReference type="PANTHER" id="PTHR12022">
    <property type="entry name" value="UBIQUINOL-CYTOCHROME C REDUCTASE COMPLEX 14 KD PROTEIN"/>
    <property type="match status" value="1"/>
</dbReference>
<dbReference type="Pfam" id="PF02271">
    <property type="entry name" value="UCR_14kD"/>
    <property type="match status" value="1"/>
</dbReference>
<dbReference type="PIRSF" id="PIRSF000022">
    <property type="entry name" value="Bc1_14K"/>
    <property type="match status" value="1"/>
</dbReference>
<dbReference type="SUPFAM" id="SSF81524">
    <property type="entry name" value="14 kDa protein of cytochrome bc1 complex (Ubiquinol-cytochrome c reductase)"/>
    <property type="match status" value="1"/>
</dbReference>
<feature type="initiator methionine" description="Removed" evidence="1">
    <location>
        <position position="1"/>
    </location>
</feature>
<feature type="chain" id="PRO_0000193525" description="Cytochrome b-c1 complex subunit 7">
    <location>
        <begin position="2"/>
        <end position="111"/>
    </location>
</feature>
<feature type="modified residue" description="N-acetylalanine" evidence="1">
    <location>
        <position position="2"/>
    </location>
</feature>
<feature type="modified residue" description="N6-acetyllysine; alternate" evidence="7">
    <location>
        <position position="12"/>
    </location>
</feature>
<feature type="modified residue" description="N6-succinyllysine; alternate" evidence="8">
    <location>
        <position position="12"/>
    </location>
</feature>
<feature type="modified residue" description="N6-acetyllysine" evidence="7">
    <location>
        <position position="19"/>
    </location>
</feature>
<feature type="modified residue" description="N6-acetyllysine; alternate" evidence="7">
    <location>
        <position position="78"/>
    </location>
</feature>
<feature type="modified residue" description="N6-succinyllysine; alternate" evidence="8">
    <location>
        <position position="78"/>
    </location>
</feature>
<feature type="modified residue" description="N6-acetyllysine" evidence="7">
    <location>
        <position position="83"/>
    </location>
</feature>
<feature type="modified residue" description="N6-acetyllysine; alternate" evidence="7">
    <location>
        <position position="88"/>
    </location>
</feature>
<feature type="modified residue" description="N6-succinyllysine; alternate" evidence="8">
    <location>
        <position position="88"/>
    </location>
</feature>
<feature type="modified residue" description="N6-acetyllysine" evidence="7">
    <location>
        <position position="96"/>
    </location>
</feature>
<feature type="sequence conflict" description="In Ref. 2; AAH31607." evidence="4" ref="2">
    <original>V</original>
    <variation>F</variation>
    <location>
        <position position="7"/>
    </location>
</feature>
<feature type="sequence conflict" description="In Ref. 2; AAH31607." evidence="4" ref="2">
    <original>L</original>
    <variation>F</variation>
    <location>
        <position position="61"/>
    </location>
</feature>
<feature type="helix" evidence="10">
    <location>
        <begin position="12"/>
        <end position="25"/>
    </location>
</feature>
<feature type="turn" evidence="10">
    <location>
        <begin position="28"/>
        <end position="31"/>
    </location>
</feature>
<feature type="helix" evidence="10">
    <location>
        <begin position="35"/>
        <end position="37"/>
    </location>
</feature>
<feature type="helix" evidence="10">
    <location>
        <begin position="42"/>
        <end position="49"/>
    </location>
</feature>
<feature type="helix" evidence="10">
    <location>
        <begin position="53"/>
        <end position="71"/>
    </location>
</feature>
<feature type="helix" evidence="10">
    <location>
        <begin position="78"/>
        <end position="80"/>
    </location>
</feature>
<feature type="turn" evidence="9">
    <location>
        <begin position="84"/>
        <end position="86"/>
    </location>
</feature>
<feature type="helix" evidence="10">
    <location>
        <begin position="92"/>
        <end position="110"/>
    </location>
</feature>
<name>QCR7_MOUSE</name>
<keyword id="KW-0002">3D-structure</keyword>
<keyword id="KW-0007">Acetylation</keyword>
<keyword id="KW-0903">Direct protein sequencing</keyword>
<keyword id="KW-0249">Electron transport</keyword>
<keyword id="KW-0472">Membrane</keyword>
<keyword id="KW-0496">Mitochondrion</keyword>
<keyword id="KW-0999">Mitochondrion inner membrane</keyword>
<keyword id="KW-1185">Reference proteome</keyword>
<keyword id="KW-0679">Respiratory chain</keyword>
<keyword id="KW-0813">Transport</keyword>
<accession>Q9D855</accession>
<accession>Q8K2E2</accession>
<comment type="function">
    <text evidence="3">Component of the ubiquinol-cytochrome c oxidoreductase, a multisubunit transmembrane complex that is part of the mitochondrial electron transport chain which drives oxidative phosphorylation. The respiratory chain contains 3 multisubunit complexes succinate dehydrogenase (complex II, CII), ubiquinol-cytochrome c oxidoreductase (cytochrome b-c1 complex, complex III, CIII) and cytochrome c oxidase (complex IV, CIV), that cooperate to transfer electrons derived from NADH and succinate to molecular oxygen, creating an electrochemical gradient over the inner membrane that drives transmembrane transport and the ATP synthase. The cytochrome b-c1 complex catalyzes electron transfer from ubiquinol to cytochrome c, linking this redox reaction to translocation of protons across the mitochondrial inner membrane, with protons being carried across the membrane as hydrogens on the quinol. In the process called Q cycle, 2 protons are consumed from the matrix, 4 protons are released into the intermembrane space and 2 electrons are passed to cytochrome c.</text>
</comment>
<comment type="subunit">
    <text evidence="2 3">Component of the ubiquinol-cytochrome c oxidoreductase (cytochrome b-c1 complex, complex III, CIII), a multisubunit enzyme composed of 11 subunits (PubMed:34616041). The complex is composed of 3 respiratory subunits cytochrome b, cytochrome c1 and Rieske protein UQCRFS1, 2 core protein subunits UQCRC1/QCR1 and UQCRC2/QCR2, and 6 low-molecular weight protein subunits UQCRH/QCR6, UQCRB/QCR7, UQCRQ/QCR8, UQCR10/QCR9, UQCR11/QCR10 and subunit 9, the cleavage product of Rieske protein UQCRFS1 (PubMed:34616041). The complex exists as an obligatory dimer and forms supercomplexes (SCs) in the inner mitochondrial membrane with NADH-ubiquinone oxidoreductase (complex I, CI) and cytochrome c oxidase (complex IV, CIV), resulting in different assemblies (supercomplex SCI(1)III(2)IV(1) and megacomplex MCI(2)III(2)IV(2)) (PubMed:19026783, PubMed:34616041).</text>
</comment>
<comment type="subcellular location">
    <subcellularLocation>
        <location evidence="3">Mitochondrion inner membrane</location>
        <topology evidence="3">Peripheral membrane protein</topology>
        <orientation evidence="3">Matrix side</orientation>
    </subcellularLocation>
</comment>
<comment type="similarity">
    <text evidence="4">Belongs to the UQCRB/QCR7 family.</text>
</comment>
<gene>
    <name type="primary">Uqcrb</name>
</gene>
<proteinExistence type="evidence at protein level"/>
<reference key="1">
    <citation type="journal article" date="2005" name="Science">
        <title>The transcriptional landscape of the mammalian genome.</title>
        <authorList>
            <person name="Carninci P."/>
            <person name="Kasukawa T."/>
            <person name="Katayama S."/>
            <person name="Gough J."/>
            <person name="Frith M.C."/>
            <person name="Maeda N."/>
            <person name="Oyama R."/>
            <person name="Ravasi T."/>
            <person name="Lenhard B."/>
            <person name="Wells C."/>
            <person name="Kodzius R."/>
            <person name="Shimokawa K."/>
            <person name="Bajic V.B."/>
            <person name="Brenner S.E."/>
            <person name="Batalov S."/>
            <person name="Forrest A.R."/>
            <person name="Zavolan M."/>
            <person name="Davis M.J."/>
            <person name="Wilming L.G."/>
            <person name="Aidinis V."/>
            <person name="Allen J.E."/>
            <person name="Ambesi-Impiombato A."/>
            <person name="Apweiler R."/>
            <person name="Aturaliya R.N."/>
            <person name="Bailey T.L."/>
            <person name="Bansal M."/>
            <person name="Baxter L."/>
            <person name="Beisel K.W."/>
            <person name="Bersano T."/>
            <person name="Bono H."/>
            <person name="Chalk A.M."/>
            <person name="Chiu K.P."/>
            <person name="Choudhary V."/>
            <person name="Christoffels A."/>
            <person name="Clutterbuck D.R."/>
            <person name="Crowe M.L."/>
            <person name="Dalla E."/>
            <person name="Dalrymple B.P."/>
            <person name="de Bono B."/>
            <person name="Della Gatta G."/>
            <person name="di Bernardo D."/>
            <person name="Down T."/>
            <person name="Engstrom P."/>
            <person name="Fagiolini M."/>
            <person name="Faulkner G."/>
            <person name="Fletcher C.F."/>
            <person name="Fukushima T."/>
            <person name="Furuno M."/>
            <person name="Futaki S."/>
            <person name="Gariboldi M."/>
            <person name="Georgii-Hemming P."/>
            <person name="Gingeras T.R."/>
            <person name="Gojobori T."/>
            <person name="Green R.E."/>
            <person name="Gustincich S."/>
            <person name="Harbers M."/>
            <person name="Hayashi Y."/>
            <person name="Hensch T.K."/>
            <person name="Hirokawa N."/>
            <person name="Hill D."/>
            <person name="Huminiecki L."/>
            <person name="Iacono M."/>
            <person name="Ikeo K."/>
            <person name="Iwama A."/>
            <person name="Ishikawa T."/>
            <person name="Jakt M."/>
            <person name="Kanapin A."/>
            <person name="Katoh M."/>
            <person name="Kawasawa Y."/>
            <person name="Kelso J."/>
            <person name="Kitamura H."/>
            <person name="Kitano H."/>
            <person name="Kollias G."/>
            <person name="Krishnan S.P."/>
            <person name="Kruger A."/>
            <person name="Kummerfeld S.K."/>
            <person name="Kurochkin I.V."/>
            <person name="Lareau L.F."/>
            <person name="Lazarevic D."/>
            <person name="Lipovich L."/>
            <person name="Liu J."/>
            <person name="Liuni S."/>
            <person name="McWilliam S."/>
            <person name="Madan Babu M."/>
            <person name="Madera M."/>
            <person name="Marchionni L."/>
            <person name="Matsuda H."/>
            <person name="Matsuzawa S."/>
            <person name="Miki H."/>
            <person name="Mignone F."/>
            <person name="Miyake S."/>
            <person name="Morris K."/>
            <person name="Mottagui-Tabar S."/>
            <person name="Mulder N."/>
            <person name="Nakano N."/>
            <person name="Nakauchi H."/>
            <person name="Ng P."/>
            <person name="Nilsson R."/>
            <person name="Nishiguchi S."/>
            <person name="Nishikawa S."/>
            <person name="Nori F."/>
            <person name="Ohara O."/>
            <person name="Okazaki Y."/>
            <person name="Orlando V."/>
            <person name="Pang K.C."/>
            <person name="Pavan W.J."/>
            <person name="Pavesi G."/>
            <person name="Pesole G."/>
            <person name="Petrovsky N."/>
            <person name="Piazza S."/>
            <person name="Reed J."/>
            <person name="Reid J.F."/>
            <person name="Ring B.Z."/>
            <person name="Ringwald M."/>
            <person name="Rost B."/>
            <person name="Ruan Y."/>
            <person name="Salzberg S.L."/>
            <person name="Sandelin A."/>
            <person name="Schneider C."/>
            <person name="Schoenbach C."/>
            <person name="Sekiguchi K."/>
            <person name="Semple C.A."/>
            <person name="Seno S."/>
            <person name="Sessa L."/>
            <person name="Sheng Y."/>
            <person name="Shibata Y."/>
            <person name="Shimada H."/>
            <person name="Shimada K."/>
            <person name="Silva D."/>
            <person name="Sinclair B."/>
            <person name="Sperling S."/>
            <person name="Stupka E."/>
            <person name="Sugiura K."/>
            <person name="Sultana R."/>
            <person name="Takenaka Y."/>
            <person name="Taki K."/>
            <person name="Tammoja K."/>
            <person name="Tan S.L."/>
            <person name="Tang S."/>
            <person name="Taylor M.S."/>
            <person name="Tegner J."/>
            <person name="Teichmann S.A."/>
            <person name="Ueda H.R."/>
            <person name="van Nimwegen E."/>
            <person name="Verardo R."/>
            <person name="Wei C.L."/>
            <person name="Yagi K."/>
            <person name="Yamanishi H."/>
            <person name="Zabarovsky E."/>
            <person name="Zhu S."/>
            <person name="Zimmer A."/>
            <person name="Hide W."/>
            <person name="Bult C."/>
            <person name="Grimmond S.M."/>
            <person name="Teasdale R.D."/>
            <person name="Liu E.T."/>
            <person name="Brusic V."/>
            <person name="Quackenbush J."/>
            <person name="Wahlestedt C."/>
            <person name="Mattick J.S."/>
            <person name="Hume D.A."/>
            <person name="Kai C."/>
            <person name="Sasaki D."/>
            <person name="Tomaru Y."/>
            <person name="Fukuda S."/>
            <person name="Kanamori-Katayama M."/>
            <person name="Suzuki M."/>
            <person name="Aoki J."/>
            <person name="Arakawa T."/>
            <person name="Iida J."/>
            <person name="Imamura K."/>
            <person name="Itoh M."/>
            <person name="Kato T."/>
            <person name="Kawaji H."/>
            <person name="Kawagashira N."/>
            <person name="Kawashima T."/>
            <person name="Kojima M."/>
            <person name="Kondo S."/>
            <person name="Konno H."/>
            <person name="Nakano K."/>
            <person name="Ninomiya N."/>
            <person name="Nishio T."/>
            <person name="Okada M."/>
            <person name="Plessy C."/>
            <person name="Shibata K."/>
            <person name="Shiraki T."/>
            <person name="Suzuki S."/>
            <person name="Tagami M."/>
            <person name="Waki K."/>
            <person name="Watahiki A."/>
            <person name="Okamura-Oho Y."/>
            <person name="Suzuki H."/>
            <person name="Kawai J."/>
            <person name="Hayashizaki Y."/>
        </authorList>
    </citation>
    <scope>NUCLEOTIDE SEQUENCE [LARGE SCALE MRNA]</scope>
    <source>
        <strain>C57BL/6J</strain>
        <tissue>Small intestine</tissue>
    </source>
</reference>
<reference key="2">
    <citation type="journal article" date="2004" name="Genome Res.">
        <title>The status, quality, and expansion of the NIH full-length cDNA project: the Mammalian Gene Collection (MGC).</title>
        <authorList>
            <consortium name="The MGC Project Team"/>
        </authorList>
    </citation>
    <scope>NUCLEOTIDE SEQUENCE [LARGE SCALE MRNA]</scope>
    <source>
        <strain>FVB/N</strain>
        <tissue>Mammary tumor</tissue>
    </source>
</reference>
<reference key="3">
    <citation type="submission" date="2007-04" db="UniProtKB">
        <authorList>
            <person name="Lubec G."/>
            <person name="Kang S.U."/>
        </authorList>
    </citation>
    <scope>PROTEIN SEQUENCE OF 20-45; 51-59; 66-72 AND 84-96</scope>
    <scope>IDENTIFICATION BY MASS SPECTROMETRY</scope>
    <source>
        <strain>C57BL/6J</strain>
        <tissue>Brain</tissue>
    </source>
</reference>
<reference key="4">
    <citation type="journal article" date="2008" name="Mol. Cell">
        <title>Respiratory active mitochondrial supercomplexes.</title>
        <authorList>
            <person name="Acin-Perez R."/>
            <person name="Fernandez-Silva P."/>
            <person name="Peleato M.L."/>
            <person name="Perez-Martos A."/>
            <person name="Enriquez J.A."/>
        </authorList>
    </citation>
    <scope>SUBUNIT</scope>
</reference>
<reference key="5">
    <citation type="journal article" date="2010" name="Cell">
        <title>A tissue-specific atlas of mouse protein phosphorylation and expression.</title>
        <authorList>
            <person name="Huttlin E.L."/>
            <person name="Jedrychowski M.P."/>
            <person name="Elias J.E."/>
            <person name="Goswami T."/>
            <person name="Rad R."/>
            <person name="Beausoleil S.A."/>
            <person name="Villen J."/>
            <person name="Haas W."/>
            <person name="Sowa M.E."/>
            <person name="Gygi S.P."/>
        </authorList>
    </citation>
    <scope>IDENTIFICATION BY MASS SPECTROMETRY [LARGE SCALE ANALYSIS]</scope>
    <source>
        <tissue>Brain</tissue>
        <tissue>Brown adipose tissue</tissue>
        <tissue>Heart</tissue>
        <tissue>Kidney</tissue>
        <tissue>Liver</tissue>
        <tissue>Lung</tissue>
        <tissue>Pancreas</tissue>
        <tissue>Spleen</tissue>
        <tissue>Testis</tissue>
    </source>
</reference>
<reference key="6">
    <citation type="journal article" date="2013" name="Mol. Cell">
        <title>SIRT5-mediated lysine desuccinylation impacts diverse metabolic pathways.</title>
        <authorList>
            <person name="Park J."/>
            <person name="Chen Y."/>
            <person name="Tishkoff D.X."/>
            <person name="Peng C."/>
            <person name="Tan M."/>
            <person name="Dai L."/>
            <person name="Xie Z."/>
            <person name="Zhang Y."/>
            <person name="Zwaans B.M."/>
            <person name="Skinner M.E."/>
            <person name="Lombard D.B."/>
            <person name="Zhao Y."/>
        </authorList>
    </citation>
    <scope>SUCCINYLATION [LARGE SCALE ANALYSIS] AT LYS-12; LYS-78 AND LYS-88</scope>
    <scope>IDENTIFICATION BY MASS SPECTROMETRY [LARGE SCALE ANALYSIS]</scope>
    <source>
        <tissue>Liver</tissue>
    </source>
</reference>
<reference key="7">
    <citation type="journal article" date="2013" name="Proc. Natl. Acad. Sci. U.S.A.">
        <title>Label-free quantitative proteomics of the lysine acetylome in mitochondria identifies substrates of SIRT3 in metabolic pathways.</title>
        <authorList>
            <person name="Rardin M.J."/>
            <person name="Newman J.C."/>
            <person name="Held J.M."/>
            <person name="Cusack M.P."/>
            <person name="Sorensen D.J."/>
            <person name="Li B."/>
            <person name="Schilling B."/>
            <person name="Mooney S.D."/>
            <person name="Kahn C.R."/>
            <person name="Verdin E."/>
            <person name="Gibson B.W."/>
        </authorList>
    </citation>
    <scope>ACETYLATION [LARGE SCALE ANALYSIS] AT LYS-12; LYS-19; LYS-78; LYS-83; LYS-88 AND LYS-96</scope>
    <scope>IDENTIFICATION BY MASS SPECTROMETRY [LARGE SCALE ANALYSIS]</scope>
    <source>
        <tissue>Liver</tissue>
    </source>
</reference>
<reference evidence="5 6" key="8">
    <citation type="journal article" date="2021" name="Nature">
        <title>Structure and assembly of the mammalian mitochondrial supercomplex CIII2CIV.</title>
        <authorList>
            <person name="Vercellino I."/>
            <person name="Sazanov L.A."/>
        </authorList>
    </citation>
    <scope>STRUCTURE BY ELECTRON MICROSCOPY (3.20 ANGSTROMS) IN COMPLEX WITH MITOCHONDRIAL RESPIRATORY SUPERCOMPLEX</scope>
    <scope>FUNCTION</scope>
    <scope>SUBCELLULAR LOCATION</scope>
    <scope>SUBUNIT</scope>
</reference>
<protein>
    <recommendedName>
        <fullName>Cytochrome b-c1 complex subunit 7</fullName>
    </recommendedName>
    <alternativeName>
        <fullName>Complex III subunit 7</fullName>
    </alternativeName>
    <alternativeName>
        <fullName>Complex III subunit VII</fullName>
    </alternativeName>
    <alternativeName>
        <fullName>Ubiquinol-cytochrome c reductase complex 14 kDa protein</fullName>
    </alternativeName>
</protein>
<sequence>MAGRSAVSASSKWLDGFRKWYYNAAGFNKLGLMRDDTLHETEDVKEAIRRLPEDLYNDRMLRIKRALDLTMRHQILPKDQWTKYEEDKFYLEPYLKEVIRERKEREEWAKK</sequence>
<organism>
    <name type="scientific">Mus musculus</name>
    <name type="common">Mouse</name>
    <dbReference type="NCBI Taxonomy" id="10090"/>
    <lineage>
        <taxon>Eukaryota</taxon>
        <taxon>Metazoa</taxon>
        <taxon>Chordata</taxon>
        <taxon>Craniata</taxon>
        <taxon>Vertebrata</taxon>
        <taxon>Euteleostomi</taxon>
        <taxon>Mammalia</taxon>
        <taxon>Eutheria</taxon>
        <taxon>Euarchontoglires</taxon>
        <taxon>Glires</taxon>
        <taxon>Rodentia</taxon>
        <taxon>Myomorpha</taxon>
        <taxon>Muroidea</taxon>
        <taxon>Muridae</taxon>
        <taxon>Murinae</taxon>
        <taxon>Mus</taxon>
        <taxon>Mus</taxon>
    </lineage>
</organism>
<evidence type="ECO:0000250" key="1">
    <source>
        <dbReference type="UniProtKB" id="P00129"/>
    </source>
</evidence>
<evidence type="ECO:0000269" key="2">
    <source>
    </source>
</evidence>
<evidence type="ECO:0000269" key="3">
    <source>
    </source>
</evidence>
<evidence type="ECO:0000305" key="4"/>
<evidence type="ECO:0000312" key="5">
    <source>
        <dbReference type="PDB" id="7O3E"/>
    </source>
</evidence>
<evidence type="ECO:0007744" key="6">
    <source>
        <dbReference type="PDB" id="7O3C"/>
    </source>
</evidence>
<evidence type="ECO:0007744" key="7">
    <source>
    </source>
</evidence>
<evidence type="ECO:0007744" key="8">
    <source>
    </source>
</evidence>
<evidence type="ECO:0007829" key="9">
    <source>
        <dbReference type="PDB" id="7O3C"/>
    </source>
</evidence>
<evidence type="ECO:0007829" key="10">
    <source>
        <dbReference type="PDB" id="7O3H"/>
    </source>
</evidence>